<reference key="1">
    <citation type="journal article" date="1999" name="Science">
        <title>Genome sequence of the radioresistant bacterium Deinococcus radiodurans R1.</title>
        <authorList>
            <person name="White O."/>
            <person name="Eisen J.A."/>
            <person name="Heidelberg J.F."/>
            <person name="Hickey E.K."/>
            <person name="Peterson J.D."/>
            <person name="Dodson R.J."/>
            <person name="Haft D.H."/>
            <person name="Gwinn M.L."/>
            <person name="Nelson W.C."/>
            <person name="Richardson D.L."/>
            <person name="Moffat K.S."/>
            <person name="Qin H."/>
            <person name="Jiang L."/>
            <person name="Pamphile W."/>
            <person name="Crosby M."/>
            <person name="Shen M."/>
            <person name="Vamathevan J.J."/>
            <person name="Lam P."/>
            <person name="McDonald L.A."/>
            <person name="Utterback T.R."/>
            <person name="Zalewski C."/>
            <person name="Makarova K.S."/>
            <person name="Aravind L."/>
            <person name="Daly M.J."/>
            <person name="Minton K.W."/>
            <person name="Fleischmann R.D."/>
            <person name="Ketchum K.A."/>
            <person name="Nelson K.E."/>
            <person name="Salzberg S.L."/>
            <person name="Smith H.O."/>
            <person name="Venter J.C."/>
            <person name="Fraser C.M."/>
        </authorList>
    </citation>
    <scope>NUCLEOTIDE SEQUENCE [LARGE SCALE GENOMIC DNA]</scope>
    <source>
        <strain>ATCC 13939 / DSM 20539 / JCM 16871 / CCUG 27074 / LMG 4051 / NBRC 15346 / NCIMB 9279 / VKM B-1422 / R1</strain>
    </source>
</reference>
<proteinExistence type="inferred from homology"/>
<protein>
    <recommendedName>
        <fullName evidence="1">ATP-dependent Clp protease adapter protein ClpS</fullName>
    </recommendedName>
</protein>
<keyword id="KW-1185">Reference proteome</keyword>
<comment type="function">
    <text evidence="1">Involved in the modulation of the specificity of the ClpAP-mediated ATP-dependent protein degradation.</text>
</comment>
<comment type="subunit">
    <text evidence="1">Binds to the N-terminal domain of the chaperone ClpA.</text>
</comment>
<comment type="similarity">
    <text evidence="1">Belongs to the ClpS family.</text>
</comment>
<comment type="sequence caution" evidence="3">
    <conflict type="erroneous initiation">
        <sequence resource="EMBL-CDS" id="AAF10166"/>
    </conflict>
</comment>
<evidence type="ECO:0000255" key="1">
    <source>
        <dbReference type="HAMAP-Rule" id="MF_00302"/>
    </source>
</evidence>
<evidence type="ECO:0000256" key="2">
    <source>
        <dbReference type="SAM" id="MobiDB-lite"/>
    </source>
</evidence>
<evidence type="ECO:0000305" key="3"/>
<sequence length="113" mass="12730">MTRPTIPPGPPGAEGRTQTLERTETKKPRLWRVLLLNDDYTPMDYVVQVLEQFFRKTEQEAELIMLAVHHKGQGVAGVYTRDVAETKVAQVTAHAQREGHPLRVVAEPESEGE</sequence>
<feature type="chain" id="PRO_0000215704" description="ATP-dependent Clp protease adapter protein ClpS">
    <location>
        <begin position="1"/>
        <end position="113"/>
    </location>
</feature>
<feature type="region of interest" description="Disordered" evidence="2">
    <location>
        <begin position="1"/>
        <end position="24"/>
    </location>
</feature>
<feature type="region of interest" description="Disordered" evidence="2">
    <location>
        <begin position="92"/>
        <end position="113"/>
    </location>
</feature>
<feature type="compositionally biased region" description="Pro residues" evidence="2">
    <location>
        <begin position="1"/>
        <end position="11"/>
    </location>
</feature>
<organism>
    <name type="scientific">Deinococcus radiodurans (strain ATCC 13939 / DSM 20539 / JCM 16871 / CCUG 27074 / LMG 4051 / NBRC 15346 / NCIMB 9279 / VKM B-1422 / R1)</name>
    <dbReference type="NCBI Taxonomy" id="243230"/>
    <lineage>
        <taxon>Bacteria</taxon>
        <taxon>Thermotogati</taxon>
        <taxon>Deinococcota</taxon>
        <taxon>Deinococci</taxon>
        <taxon>Deinococcales</taxon>
        <taxon>Deinococcaceae</taxon>
        <taxon>Deinococcus</taxon>
    </lineage>
</organism>
<gene>
    <name evidence="1" type="primary">clpS</name>
    <name type="ordered locus">DR_0586</name>
</gene>
<dbReference type="EMBL" id="AE000513">
    <property type="protein sequence ID" value="AAF10166.1"/>
    <property type="status" value="ALT_INIT"/>
    <property type="molecule type" value="Genomic_DNA"/>
</dbReference>
<dbReference type="PIR" id="B75500">
    <property type="entry name" value="B75500"/>
</dbReference>
<dbReference type="RefSeq" id="NP_294309.1">
    <property type="nucleotide sequence ID" value="NC_001263.1"/>
</dbReference>
<dbReference type="RefSeq" id="WP_027479522.1">
    <property type="nucleotide sequence ID" value="NC_001263.1"/>
</dbReference>
<dbReference type="SMR" id="Q9RWS9"/>
<dbReference type="STRING" id="243230.DR_0586"/>
<dbReference type="PaxDb" id="243230-DR_0586"/>
<dbReference type="EnsemblBacteria" id="AAF10166">
    <property type="protein sequence ID" value="AAF10166"/>
    <property type="gene ID" value="DR_0586"/>
</dbReference>
<dbReference type="GeneID" id="69516829"/>
<dbReference type="KEGG" id="dra:DR_0586"/>
<dbReference type="PATRIC" id="fig|243230.17.peg.764"/>
<dbReference type="eggNOG" id="COG2127">
    <property type="taxonomic scope" value="Bacteria"/>
</dbReference>
<dbReference type="HOGENOM" id="CLU_134358_0_0_0"/>
<dbReference type="InParanoid" id="Q9RWS9"/>
<dbReference type="OrthoDB" id="9796121at2"/>
<dbReference type="Proteomes" id="UP000002524">
    <property type="component" value="Chromosome 1"/>
</dbReference>
<dbReference type="GO" id="GO:0030163">
    <property type="term" value="P:protein catabolic process"/>
    <property type="evidence" value="ECO:0007669"/>
    <property type="project" value="InterPro"/>
</dbReference>
<dbReference type="GO" id="GO:0006508">
    <property type="term" value="P:proteolysis"/>
    <property type="evidence" value="ECO:0007669"/>
    <property type="project" value="UniProtKB-UniRule"/>
</dbReference>
<dbReference type="FunFam" id="3.30.1390.10:FF:000002">
    <property type="entry name" value="ATP-dependent Clp protease adapter protein ClpS"/>
    <property type="match status" value="1"/>
</dbReference>
<dbReference type="Gene3D" id="3.30.1390.10">
    <property type="match status" value="1"/>
</dbReference>
<dbReference type="HAMAP" id="MF_00302">
    <property type="entry name" value="ClpS"/>
    <property type="match status" value="1"/>
</dbReference>
<dbReference type="InterPro" id="IPR022935">
    <property type="entry name" value="ClpS"/>
</dbReference>
<dbReference type="InterPro" id="IPR003769">
    <property type="entry name" value="ClpS_core"/>
</dbReference>
<dbReference type="InterPro" id="IPR014719">
    <property type="entry name" value="Ribosomal_bL12_C/ClpS-like"/>
</dbReference>
<dbReference type="NCBIfam" id="NF000672">
    <property type="entry name" value="PRK00033.1-5"/>
    <property type="match status" value="1"/>
</dbReference>
<dbReference type="PANTHER" id="PTHR33473:SF19">
    <property type="entry name" value="ATP-DEPENDENT CLP PROTEASE ADAPTER PROTEIN CLPS"/>
    <property type="match status" value="1"/>
</dbReference>
<dbReference type="PANTHER" id="PTHR33473">
    <property type="entry name" value="ATP-DEPENDENT CLP PROTEASE ADAPTER PROTEIN CLPS1, CHLOROPLASTIC"/>
    <property type="match status" value="1"/>
</dbReference>
<dbReference type="Pfam" id="PF02617">
    <property type="entry name" value="ClpS"/>
    <property type="match status" value="1"/>
</dbReference>
<dbReference type="SUPFAM" id="SSF54736">
    <property type="entry name" value="ClpS-like"/>
    <property type="match status" value="1"/>
</dbReference>
<name>CLPS_DEIRA</name>
<accession>Q9RWS9</accession>